<gene>
    <name type="primary">SLC7A10</name>
    <name type="synonym">ASC1</name>
</gene>
<accession>Q9NS82</accession>
<accession>B2RE84</accession>
<reference key="1">
    <citation type="journal article" date="2000" name="Neurosci. Lett.">
        <title>Cloning and characterization of a human brain Na+-independent transporter for small neutral amino acids that transports D-serine with high affinity.</title>
        <authorList>
            <person name="Nakauchi J."/>
            <person name="Matsuo H."/>
            <person name="Kim D.K."/>
            <person name="Goto A."/>
            <person name="Chairoungdua A."/>
            <person name="Cha S.H."/>
            <person name="Inatomi J."/>
            <person name="Shiokawa Y."/>
            <person name="Yamaguchi K."/>
            <person name="Saito I."/>
            <person name="Endou H."/>
            <person name="Kanai Y."/>
        </authorList>
    </citation>
    <scope>NUCLEOTIDE SEQUENCE [MRNA]</scope>
    <scope>FUNCTION</scope>
    <scope>BIOPHYSICOCHEMICAL PROPERTIES</scope>
    <scope>TISSUE SPECIFICITY</scope>
    <source>
        <tissue>Brain</tissue>
    </source>
</reference>
<reference key="2">
    <citation type="journal article" date="2001" name="Mol. Genet. Metab.">
        <title>Is the SLC7A10 gene on chromosome 19 a candidate locus for cystinuria?</title>
        <authorList>
            <person name="Leclerc D."/>
            <person name="Wu Q."/>
            <person name="Ellis J.R."/>
            <person name="Goodyer P."/>
            <person name="Rozen R."/>
        </authorList>
    </citation>
    <scope>NUCLEOTIDE SEQUENCE [GENOMIC DNA]</scope>
    <scope>VARIANT ASP-112</scope>
</reference>
<reference key="3">
    <citation type="submission" date="2000-05" db="EMBL/GenBank/DDBJ databases">
        <authorList>
            <person name="Bassi M.T."/>
            <person name="Borsani G."/>
            <person name="Nunes V."/>
            <person name="Palacin M."/>
        </authorList>
    </citation>
    <scope>NUCLEOTIDE SEQUENCE [MRNA]</scope>
    <source>
        <tissue>Kidney</tissue>
    </source>
</reference>
<reference key="4">
    <citation type="journal article" date="2004" name="Nat. Genet.">
        <title>Complete sequencing and characterization of 21,243 full-length human cDNAs.</title>
        <authorList>
            <person name="Ota T."/>
            <person name="Suzuki Y."/>
            <person name="Nishikawa T."/>
            <person name="Otsuki T."/>
            <person name="Sugiyama T."/>
            <person name="Irie R."/>
            <person name="Wakamatsu A."/>
            <person name="Hayashi K."/>
            <person name="Sato H."/>
            <person name="Nagai K."/>
            <person name="Kimura K."/>
            <person name="Makita H."/>
            <person name="Sekine M."/>
            <person name="Obayashi M."/>
            <person name="Nishi T."/>
            <person name="Shibahara T."/>
            <person name="Tanaka T."/>
            <person name="Ishii S."/>
            <person name="Yamamoto J."/>
            <person name="Saito K."/>
            <person name="Kawai Y."/>
            <person name="Isono Y."/>
            <person name="Nakamura Y."/>
            <person name="Nagahari K."/>
            <person name="Murakami K."/>
            <person name="Yasuda T."/>
            <person name="Iwayanagi T."/>
            <person name="Wagatsuma M."/>
            <person name="Shiratori A."/>
            <person name="Sudo H."/>
            <person name="Hosoiri T."/>
            <person name="Kaku Y."/>
            <person name="Kodaira H."/>
            <person name="Kondo H."/>
            <person name="Sugawara M."/>
            <person name="Takahashi M."/>
            <person name="Kanda K."/>
            <person name="Yokoi T."/>
            <person name="Furuya T."/>
            <person name="Kikkawa E."/>
            <person name="Omura Y."/>
            <person name="Abe K."/>
            <person name="Kamihara K."/>
            <person name="Katsuta N."/>
            <person name="Sato K."/>
            <person name="Tanikawa M."/>
            <person name="Yamazaki M."/>
            <person name="Ninomiya K."/>
            <person name="Ishibashi T."/>
            <person name="Yamashita H."/>
            <person name="Murakawa K."/>
            <person name="Fujimori K."/>
            <person name="Tanai H."/>
            <person name="Kimata M."/>
            <person name="Watanabe M."/>
            <person name="Hiraoka S."/>
            <person name="Chiba Y."/>
            <person name="Ishida S."/>
            <person name="Ono Y."/>
            <person name="Takiguchi S."/>
            <person name="Watanabe S."/>
            <person name="Yosida M."/>
            <person name="Hotuta T."/>
            <person name="Kusano J."/>
            <person name="Kanehori K."/>
            <person name="Takahashi-Fujii A."/>
            <person name="Hara H."/>
            <person name="Tanase T.-O."/>
            <person name="Nomura Y."/>
            <person name="Togiya S."/>
            <person name="Komai F."/>
            <person name="Hara R."/>
            <person name="Takeuchi K."/>
            <person name="Arita M."/>
            <person name="Imose N."/>
            <person name="Musashino K."/>
            <person name="Yuuki H."/>
            <person name="Oshima A."/>
            <person name="Sasaki N."/>
            <person name="Aotsuka S."/>
            <person name="Yoshikawa Y."/>
            <person name="Matsunawa H."/>
            <person name="Ichihara T."/>
            <person name="Shiohata N."/>
            <person name="Sano S."/>
            <person name="Moriya S."/>
            <person name="Momiyama H."/>
            <person name="Satoh N."/>
            <person name="Takami S."/>
            <person name="Terashima Y."/>
            <person name="Suzuki O."/>
            <person name="Nakagawa S."/>
            <person name="Senoh A."/>
            <person name="Mizoguchi H."/>
            <person name="Goto Y."/>
            <person name="Shimizu F."/>
            <person name="Wakebe H."/>
            <person name="Hishigaki H."/>
            <person name="Watanabe T."/>
            <person name="Sugiyama A."/>
            <person name="Takemoto M."/>
            <person name="Kawakami B."/>
            <person name="Yamazaki M."/>
            <person name="Watanabe K."/>
            <person name="Kumagai A."/>
            <person name="Itakura S."/>
            <person name="Fukuzumi Y."/>
            <person name="Fujimori Y."/>
            <person name="Komiyama M."/>
            <person name="Tashiro H."/>
            <person name="Tanigami A."/>
            <person name="Fujiwara T."/>
            <person name="Ono T."/>
            <person name="Yamada K."/>
            <person name="Fujii Y."/>
            <person name="Ozaki K."/>
            <person name="Hirao M."/>
            <person name="Ohmori Y."/>
            <person name="Kawabata A."/>
            <person name="Hikiji T."/>
            <person name="Kobatake N."/>
            <person name="Inagaki H."/>
            <person name="Ikema Y."/>
            <person name="Okamoto S."/>
            <person name="Okitani R."/>
            <person name="Kawakami T."/>
            <person name="Noguchi S."/>
            <person name="Itoh T."/>
            <person name="Shigeta K."/>
            <person name="Senba T."/>
            <person name="Matsumura K."/>
            <person name="Nakajima Y."/>
            <person name="Mizuno T."/>
            <person name="Morinaga M."/>
            <person name="Sasaki M."/>
            <person name="Togashi T."/>
            <person name="Oyama M."/>
            <person name="Hata H."/>
            <person name="Watanabe M."/>
            <person name="Komatsu T."/>
            <person name="Mizushima-Sugano J."/>
            <person name="Satoh T."/>
            <person name="Shirai Y."/>
            <person name="Takahashi Y."/>
            <person name="Nakagawa K."/>
            <person name="Okumura K."/>
            <person name="Nagase T."/>
            <person name="Nomura N."/>
            <person name="Kikuchi H."/>
            <person name="Masuho Y."/>
            <person name="Yamashita R."/>
            <person name="Nakai K."/>
            <person name="Yada T."/>
            <person name="Nakamura Y."/>
            <person name="Ohara O."/>
            <person name="Isogai T."/>
            <person name="Sugano S."/>
        </authorList>
    </citation>
    <scope>NUCLEOTIDE SEQUENCE [LARGE SCALE MRNA]</scope>
    <source>
        <tissue>Amygdala</tissue>
    </source>
</reference>
<reference key="5">
    <citation type="journal article" date="2004" name="Genome Res.">
        <title>The status, quality, and expansion of the NIH full-length cDNA project: the Mammalian Gene Collection (MGC).</title>
        <authorList>
            <consortium name="The MGC Project Team"/>
        </authorList>
    </citation>
    <scope>NUCLEOTIDE SEQUENCE [LARGE SCALE MRNA]</scope>
    <source>
        <tissue>Brain</tissue>
    </source>
</reference>
<sequence>MAGHTQQPSGRGNPRPAPSPSPVPGTVPGASERVALKKEIGLLSACTIIIGNIIGSGIFISPKGVLEHSGSVGLALFVWVLGGGVTALGSLCYAELGVAIPKSGGDYAYVTEIFGGLAGFLLLWSAVLIMYPTSLAVISMTFSNYVLQPVFPNCIPPTTASRVLSMACLMLLTWVNSSSVRWATRIQDMFTGGKLLALSLIIGVGLLQIFQGHFEELRPSNAFAFWMTPSVGHLALAFLQGSFAFSGWNFLNYVTEEMVDARKNLPRAIFISIPLVTFVYTFTNIAYFTAMSPQELLSSNAVAVTFGEKLLGYFSWVMPVSVALSTFGGINGYLFTYSRLCFSGAREGHLPSLLAMIHVRHCTPIPALLVCCGATAVIMLVGDTYTLINYVSFINYLCYGVTILGLLLLRWRRPALHRPIKVNLLIPVAYLVFWAFLLVFSFISEPMVCGVGVIIILTGVPIFFLGVFWRSKPKCVHRLTESMTHWGQELCFVVYPQDAPEEEENGPCPPSLLPATDKPSKPQ</sequence>
<keyword id="KW-0002">3D-structure</keyword>
<keyword id="KW-0029">Amino-acid transport</keyword>
<keyword id="KW-1003">Cell membrane</keyword>
<keyword id="KW-1015">Disulfide bond</keyword>
<keyword id="KW-0472">Membrane</keyword>
<keyword id="KW-1267">Proteomics identification</keyword>
<keyword id="KW-1185">Reference proteome</keyword>
<keyword id="KW-0812">Transmembrane</keyword>
<keyword id="KW-1133">Transmembrane helix</keyword>
<keyword id="KW-0813">Transport</keyword>
<evidence type="ECO:0000250" key="1">
    <source>
        <dbReference type="UniProtKB" id="P63115"/>
    </source>
</evidence>
<evidence type="ECO:0000250" key="2">
    <source>
        <dbReference type="UniProtKB" id="P63116"/>
    </source>
</evidence>
<evidence type="ECO:0000255" key="3"/>
<evidence type="ECO:0000256" key="4">
    <source>
        <dbReference type="SAM" id="MobiDB-lite"/>
    </source>
</evidence>
<evidence type="ECO:0000269" key="5">
    <source>
    </source>
</evidence>
<evidence type="ECO:0000269" key="6">
    <source>
    </source>
</evidence>
<evidence type="ECO:0000305" key="7"/>
<evidence type="ECO:0007829" key="8">
    <source>
        <dbReference type="PDB" id="8WNS"/>
    </source>
</evidence>
<organism>
    <name type="scientific">Homo sapiens</name>
    <name type="common">Human</name>
    <dbReference type="NCBI Taxonomy" id="9606"/>
    <lineage>
        <taxon>Eukaryota</taxon>
        <taxon>Metazoa</taxon>
        <taxon>Chordata</taxon>
        <taxon>Craniata</taxon>
        <taxon>Vertebrata</taxon>
        <taxon>Euteleostomi</taxon>
        <taxon>Mammalia</taxon>
        <taxon>Eutheria</taxon>
        <taxon>Euarchontoglires</taxon>
        <taxon>Primates</taxon>
        <taxon>Haplorrhini</taxon>
        <taxon>Catarrhini</taxon>
        <taxon>Hominidae</taxon>
        <taxon>Homo</taxon>
    </lineage>
</organism>
<comment type="function">
    <text evidence="1 2 5">Associates with SLC3A2/4F2hc to form a functional heterodimeric complex that translocates small neutral L- and D-amino acids across the plasma membrane. Preferentially mediates exchange transport, but can also operate via facilitated diffusion (By similarity) (PubMed:10863037). Acts as a major transporter for glycine, L- and D-serine in the central nervous system. At the spinal cord and brainstem regulates glycine metabolism and glycinergic inhibitory neurotransmission by providing for glycine de novo synthesis from L-serine and glycine recycling from astrocytes to glycinergic motor neurons (By similarity). At Schaffer collateral-CA1 synapses mediates D-serine and glycine release that modulates post-synaptic activation of NMDA receptors and excitatory glutamatergic transmission (By similarity). May regulate D-serine release from mesenchymal progenitors located in developing subcutaneous adipose tissue, favoring white adipocyte over thermogenic beige adipocyte lineage commitment (By similarity).</text>
</comment>
<comment type="catalytic activity">
    <reaction evidence="1">
        <text>L-alanine(in) + glycine(out) = L-alanine(out) + glycine(in)</text>
        <dbReference type="Rhea" id="RHEA:74019"/>
        <dbReference type="ChEBI" id="CHEBI:57305"/>
        <dbReference type="ChEBI" id="CHEBI:57972"/>
    </reaction>
</comment>
<comment type="catalytic activity">
    <reaction evidence="1">
        <text>L-serine(out) + L-alanine(in) = L-serine(in) + L-alanine(out)</text>
        <dbReference type="Rhea" id="RHEA:74023"/>
        <dbReference type="ChEBI" id="CHEBI:33384"/>
        <dbReference type="ChEBI" id="CHEBI:57972"/>
    </reaction>
</comment>
<comment type="catalytic activity">
    <reaction evidence="1">
        <text>L-threonine(out) + L-alanine(in) = L-threonine(in) + L-alanine(out)</text>
        <dbReference type="Rhea" id="RHEA:74027"/>
        <dbReference type="ChEBI" id="CHEBI:57926"/>
        <dbReference type="ChEBI" id="CHEBI:57972"/>
    </reaction>
</comment>
<comment type="catalytic activity">
    <reaction evidence="1">
        <text>L-cysteine(out) + L-alanine(in) = L-cysteine(in) + L-alanine(out)</text>
        <dbReference type="Rhea" id="RHEA:74031"/>
        <dbReference type="ChEBI" id="CHEBI:35235"/>
        <dbReference type="ChEBI" id="CHEBI:57972"/>
    </reaction>
</comment>
<comment type="catalytic activity">
    <reaction evidence="1">
        <text>2-aminoisobutanoate(out) + L-alanine(in) = 2-aminoisobutanoate(in) + L-alanine(out)</text>
        <dbReference type="Rhea" id="RHEA:74063"/>
        <dbReference type="ChEBI" id="CHEBI:57972"/>
        <dbReference type="ChEBI" id="CHEBI:193090"/>
    </reaction>
</comment>
<comment type="catalytic activity">
    <reaction evidence="1">
        <text>D-serine(out) + L-alanine(in) = D-serine(in) + L-alanine(out)</text>
        <dbReference type="Rhea" id="RHEA:74035"/>
        <dbReference type="ChEBI" id="CHEBI:35247"/>
        <dbReference type="ChEBI" id="CHEBI:57972"/>
    </reaction>
</comment>
<comment type="catalytic activity">
    <reaction evidence="1">
        <text>D-alanine(out) + L-alanine(in) = D-alanine(in) + L-alanine(out)</text>
        <dbReference type="Rhea" id="RHEA:74039"/>
        <dbReference type="ChEBI" id="CHEBI:57416"/>
        <dbReference type="ChEBI" id="CHEBI:57972"/>
    </reaction>
</comment>
<comment type="catalytic activity">
    <reaction evidence="1">
        <text>L-valine(out) + L-alanine(in) = L-valine(in) + L-alanine(out)</text>
        <dbReference type="Rhea" id="RHEA:74047"/>
        <dbReference type="ChEBI" id="CHEBI:57762"/>
        <dbReference type="ChEBI" id="CHEBI:57972"/>
    </reaction>
</comment>
<comment type="catalytic activity">
    <reaction evidence="1">
        <text>L-methionine(out) + L-alanine(in) = L-methionine(in) + L-alanine(out)</text>
        <dbReference type="Rhea" id="RHEA:74043"/>
        <dbReference type="ChEBI" id="CHEBI:57844"/>
        <dbReference type="ChEBI" id="CHEBI:57972"/>
    </reaction>
</comment>
<comment type="catalytic activity">
    <reaction evidence="1">
        <text>beta-alanine(out) + L-alanine(in) = beta-alanine(in) + L-alanine(out)</text>
        <dbReference type="Rhea" id="RHEA:74059"/>
        <dbReference type="ChEBI" id="CHEBI:57966"/>
        <dbReference type="ChEBI" id="CHEBI:57972"/>
    </reaction>
</comment>
<comment type="catalytic activity">
    <reaction evidence="1">
        <text>D-cysteine(out) + L-alanine(in) = D-cysteine(in) + L-alanine(out)</text>
        <dbReference type="Rhea" id="RHEA:74055"/>
        <dbReference type="ChEBI" id="CHEBI:35236"/>
        <dbReference type="ChEBI" id="CHEBI:57972"/>
    </reaction>
</comment>
<comment type="catalytic activity">
    <reaction evidence="1">
        <text>D-threonine(out) + L-alanine(in) = D-threonine(in) + L-alanine(out)</text>
        <dbReference type="Rhea" id="RHEA:74051"/>
        <dbReference type="ChEBI" id="CHEBI:57757"/>
        <dbReference type="ChEBI" id="CHEBI:57972"/>
    </reaction>
</comment>
<comment type="catalytic activity">
    <reaction evidence="2">
        <text>D-isoleucine(out) + D-serine(in) = D-isoleucine(in) + D-serine(out)</text>
        <dbReference type="Rhea" id="RHEA:74299"/>
        <dbReference type="ChEBI" id="CHEBI:35247"/>
        <dbReference type="ChEBI" id="CHEBI:193151"/>
    </reaction>
    <physiologicalReaction direction="left-to-right" evidence="2">
        <dbReference type="Rhea" id="RHEA:74300"/>
    </physiologicalReaction>
</comment>
<comment type="catalytic activity">
    <reaction evidence="2">
        <text>D-serine(in) = D-serine(out)</text>
        <dbReference type="Rhea" id="RHEA:29455"/>
        <dbReference type="ChEBI" id="CHEBI:35247"/>
    </reaction>
</comment>
<comment type="biophysicochemical properties">
    <kinetics>
        <KM evidence="5">22.8 uM for D-serine</KM>
        <KM evidence="5">9.16 uM for L-alanine</KM>
    </kinetics>
</comment>
<comment type="subunit">
    <text evidence="1">Disulfide-linked heterodimer with the amino acid transport protein SLC3A2/4F2hc.</text>
</comment>
<comment type="interaction">
    <interactant intactId="EBI-12068238">
        <id>Q9NS82</id>
    </interactant>
    <interactant intactId="EBI-743771">
        <id>Q92624</id>
        <label>APPBP2</label>
    </interactant>
    <organismsDiffer>false</organismsDiffer>
    <experiments>3</experiments>
</comment>
<comment type="subcellular location">
    <subcellularLocation>
        <location evidence="1">Cell membrane</location>
        <topology evidence="3">Multi-pass membrane protein</topology>
    </subcellularLocation>
    <text evidence="1">Colocalizes with OLIG2 in astrocytic processes. Localizes to the plasma membrane in mature adipocytes and to intracellular structures in preadipocytes.</text>
</comment>
<comment type="tissue specificity">
    <text evidence="5">Expressed in brain, heart, kidney, liver, lung, pancreas, placenta, and skeletal muscle.</text>
</comment>
<comment type="similarity">
    <text evidence="7">Belongs to the amino acid-polyamine-organocation (APC) superfamily.</text>
</comment>
<proteinExistence type="evidence at protein level"/>
<feature type="chain" id="PRO_0000054276" description="Asc-type amino acid transporter 1">
    <location>
        <begin position="1"/>
        <end position="523"/>
    </location>
</feature>
<feature type="transmembrane region" description="Helical" evidence="3">
    <location>
        <begin position="40"/>
        <end position="60"/>
    </location>
</feature>
<feature type="transmembrane region" description="Helical" evidence="3">
    <location>
        <begin position="72"/>
        <end position="92"/>
    </location>
</feature>
<feature type="transmembrane region" description="Helical" evidence="3">
    <location>
        <begin position="113"/>
        <end position="133"/>
    </location>
</feature>
<feature type="transmembrane region" description="Helical" evidence="3">
    <location>
        <begin position="268"/>
        <end position="288"/>
    </location>
</feature>
<feature type="transmembrane region" description="Helical" evidence="3">
    <location>
        <begin position="310"/>
        <end position="330"/>
    </location>
</feature>
<feature type="transmembrane region" description="Helical" evidence="3">
    <location>
        <begin position="362"/>
        <end position="382"/>
    </location>
</feature>
<feature type="transmembrane region" description="Helical" evidence="3">
    <location>
        <begin position="388"/>
        <end position="408"/>
    </location>
</feature>
<feature type="transmembrane region" description="Helical" evidence="3">
    <location>
        <begin position="424"/>
        <end position="444"/>
    </location>
</feature>
<feature type="transmembrane region" description="Helical" evidence="3">
    <location>
        <begin position="448"/>
        <end position="468"/>
    </location>
</feature>
<feature type="region of interest" description="Disordered" evidence="4">
    <location>
        <begin position="1"/>
        <end position="28"/>
    </location>
</feature>
<feature type="region of interest" description="Disordered" evidence="4">
    <location>
        <begin position="499"/>
        <end position="523"/>
    </location>
</feature>
<feature type="compositionally biased region" description="Pro residues" evidence="4">
    <location>
        <begin position="15"/>
        <end position="25"/>
    </location>
</feature>
<feature type="sequence variant" id="VAR_014282" description="In a family with cystinuria; dbSNP:rs79717007." evidence="6">
    <original>E</original>
    <variation>D</variation>
    <location>
        <position position="112"/>
    </location>
</feature>
<feature type="sequence variant" id="VAR_048158" description="In dbSNP:rs34663170.">
    <original>R</original>
    <variation>Q</variation>
    <location>
        <position position="413"/>
    </location>
</feature>
<feature type="helix" evidence="8">
    <location>
        <begin position="43"/>
        <end position="53"/>
    </location>
</feature>
<feature type="turn" evidence="8">
    <location>
        <begin position="56"/>
        <end position="60"/>
    </location>
</feature>
<feature type="helix" evidence="8">
    <location>
        <begin position="61"/>
        <end position="69"/>
    </location>
</feature>
<feature type="helix" evidence="8">
    <location>
        <begin position="72"/>
        <end position="99"/>
    </location>
</feature>
<feature type="helix" evidence="8">
    <location>
        <begin position="106"/>
        <end position="113"/>
    </location>
</feature>
<feature type="helix" evidence="8">
    <location>
        <begin position="116"/>
        <end position="128"/>
    </location>
</feature>
<feature type="helix" evidence="8">
    <location>
        <begin position="130"/>
        <end position="147"/>
    </location>
</feature>
<feature type="turn" evidence="8">
    <location>
        <begin position="148"/>
        <end position="150"/>
    </location>
</feature>
<feature type="strand" evidence="8">
    <location>
        <begin position="151"/>
        <end position="154"/>
    </location>
</feature>
<feature type="helix" evidence="8">
    <location>
        <begin position="158"/>
        <end position="178"/>
    </location>
</feature>
<feature type="helix" evidence="8">
    <location>
        <begin position="181"/>
        <end position="211"/>
    </location>
</feature>
<feature type="turn" evidence="8">
    <location>
        <begin position="215"/>
        <end position="217"/>
    </location>
</feature>
<feature type="helix" evidence="8">
    <location>
        <begin position="219"/>
        <end position="222"/>
    </location>
</feature>
<feature type="helix" evidence="8">
    <location>
        <begin position="231"/>
        <end position="241"/>
    </location>
</feature>
<feature type="turn" evidence="8">
    <location>
        <begin position="242"/>
        <end position="247"/>
    </location>
</feature>
<feature type="helix" evidence="8">
    <location>
        <begin position="248"/>
        <end position="254"/>
    </location>
</feature>
<feature type="strand" evidence="8">
    <location>
        <begin position="257"/>
        <end position="259"/>
    </location>
</feature>
<feature type="helix" evidence="8">
    <location>
        <begin position="261"/>
        <end position="290"/>
    </location>
</feature>
<feature type="helix" evidence="8">
    <location>
        <begin position="293"/>
        <end position="297"/>
    </location>
</feature>
<feature type="helix" evidence="8">
    <location>
        <begin position="302"/>
        <end position="310"/>
    </location>
</feature>
<feature type="helix" evidence="8">
    <location>
        <begin position="313"/>
        <end position="316"/>
    </location>
</feature>
<feature type="helix" evidence="8">
    <location>
        <begin position="317"/>
        <end position="347"/>
    </location>
</feature>
<feature type="strand" evidence="8">
    <location>
        <begin position="348"/>
        <end position="350"/>
    </location>
</feature>
<feature type="helix" evidence="8">
    <location>
        <begin position="352"/>
        <end position="354"/>
    </location>
</feature>
<feature type="strand" evidence="8">
    <location>
        <begin position="357"/>
        <end position="361"/>
    </location>
</feature>
<feature type="helix" evidence="8">
    <location>
        <begin position="365"/>
        <end position="379"/>
    </location>
</feature>
<feature type="helix" evidence="8">
    <location>
        <begin position="384"/>
        <end position="412"/>
    </location>
</feature>
<feature type="helix" evidence="8">
    <location>
        <begin position="425"/>
        <end position="444"/>
    </location>
</feature>
<feature type="helix" evidence="8">
    <location>
        <begin position="446"/>
        <end position="457"/>
    </location>
</feature>
<feature type="helix" evidence="8">
    <location>
        <begin position="459"/>
        <end position="466"/>
    </location>
</feature>
<feature type="helix" evidence="8">
    <location>
        <begin position="474"/>
        <end position="491"/>
    </location>
</feature>
<name>AAA1_HUMAN</name>
<protein>
    <recommendedName>
        <fullName>Asc-type amino acid transporter 1</fullName>
        <shortName>Asc-1</shortName>
    </recommendedName>
    <alternativeName>
        <fullName>Solute carrier family 7 member 10</fullName>
    </alternativeName>
</protein>
<dbReference type="EMBL" id="AB037670">
    <property type="protein sequence ID" value="BAB03213.1"/>
    <property type="molecule type" value="mRNA"/>
</dbReference>
<dbReference type="EMBL" id="AF340165">
    <property type="protein sequence ID" value="AAK93960.1"/>
    <property type="molecule type" value="Genomic_DNA"/>
</dbReference>
<dbReference type="EMBL" id="AF340155">
    <property type="protein sequence ID" value="AAK93960.1"/>
    <property type="status" value="JOINED"/>
    <property type="molecule type" value="Genomic_DNA"/>
</dbReference>
<dbReference type="EMBL" id="AF340156">
    <property type="protein sequence ID" value="AAK93960.1"/>
    <property type="status" value="JOINED"/>
    <property type="molecule type" value="Genomic_DNA"/>
</dbReference>
<dbReference type="EMBL" id="AF340157">
    <property type="protein sequence ID" value="AAK93960.1"/>
    <property type="status" value="JOINED"/>
    <property type="molecule type" value="Genomic_DNA"/>
</dbReference>
<dbReference type="EMBL" id="AF340158">
    <property type="protein sequence ID" value="AAK93960.1"/>
    <property type="status" value="JOINED"/>
    <property type="molecule type" value="Genomic_DNA"/>
</dbReference>
<dbReference type="EMBL" id="AF340159">
    <property type="protein sequence ID" value="AAK93960.1"/>
    <property type="status" value="JOINED"/>
    <property type="molecule type" value="Genomic_DNA"/>
</dbReference>
<dbReference type="EMBL" id="AF340160">
    <property type="protein sequence ID" value="AAK93960.1"/>
    <property type="status" value="JOINED"/>
    <property type="molecule type" value="Genomic_DNA"/>
</dbReference>
<dbReference type="EMBL" id="AF340161">
    <property type="protein sequence ID" value="AAK93960.1"/>
    <property type="status" value="JOINED"/>
    <property type="molecule type" value="Genomic_DNA"/>
</dbReference>
<dbReference type="EMBL" id="AF340162">
    <property type="protein sequence ID" value="AAK93960.1"/>
    <property type="status" value="JOINED"/>
    <property type="molecule type" value="Genomic_DNA"/>
</dbReference>
<dbReference type="EMBL" id="AF340163">
    <property type="protein sequence ID" value="AAK93960.1"/>
    <property type="status" value="JOINED"/>
    <property type="molecule type" value="Genomic_DNA"/>
</dbReference>
<dbReference type="EMBL" id="AF340164">
    <property type="protein sequence ID" value="AAK93960.1"/>
    <property type="status" value="JOINED"/>
    <property type="molecule type" value="Genomic_DNA"/>
</dbReference>
<dbReference type="EMBL" id="AJ277731">
    <property type="protein sequence ID" value="CAC81900.1"/>
    <property type="molecule type" value="mRNA"/>
</dbReference>
<dbReference type="EMBL" id="AK316594">
    <property type="protein sequence ID" value="BAG38181.1"/>
    <property type="molecule type" value="mRNA"/>
</dbReference>
<dbReference type="EMBL" id="BC035627">
    <property type="protein sequence ID" value="AAH35627.1"/>
    <property type="molecule type" value="mRNA"/>
</dbReference>
<dbReference type="CCDS" id="CCDS12431.1"/>
<dbReference type="RefSeq" id="NP_062823.1">
    <property type="nucleotide sequence ID" value="NM_019849.3"/>
</dbReference>
<dbReference type="PDB" id="8QEY">
    <property type="method" value="EM"/>
    <property type="resolution" value="4.00 A"/>
    <property type="chains" value="A=1-523"/>
</dbReference>
<dbReference type="PDB" id="8WNS">
    <property type="method" value="EM"/>
    <property type="resolution" value="3.42 A"/>
    <property type="chains" value="B=1-523"/>
</dbReference>
<dbReference type="PDB" id="8WNT">
    <property type="method" value="EM"/>
    <property type="resolution" value="3.42 A"/>
    <property type="chains" value="B=1-523"/>
</dbReference>
<dbReference type="PDB" id="8WNY">
    <property type="method" value="EM"/>
    <property type="resolution" value="3.50 A"/>
    <property type="chains" value="B=1-523"/>
</dbReference>
<dbReference type="PDBsum" id="8QEY"/>
<dbReference type="PDBsum" id="8WNS"/>
<dbReference type="PDBsum" id="8WNT"/>
<dbReference type="PDBsum" id="8WNY"/>
<dbReference type="EMDB" id="EMD-18379"/>
<dbReference type="EMDB" id="EMD-37671"/>
<dbReference type="EMDB" id="EMD-37672"/>
<dbReference type="EMDB" id="EMD-37675"/>
<dbReference type="SMR" id="Q9NS82"/>
<dbReference type="BioGRID" id="121136">
    <property type="interactions" value="2"/>
</dbReference>
<dbReference type="ComplexPortal" id="CPX-8189">
    <property type="entry name" value="ASC1-4F2 heteromeric amino acid transporter complex"/>
</dbReference>
<dbReference type="FunCoup" id="Q9NS82">
    <property type="interactions" value="281"/>
</dbReference>
<dbReference type="IntAct" id="Q9NS82">
    <property type="interactions" value="3"/>
</dbReference>
<dbReference type="MINT" id="Q9NS82"/>
<dbReference type="STRING" id="9606.ENSP00000253188"/>
<dbReference type="DrugBank" id="DB01042">
    <property type="generic name" value="Melphalan"/>
</dbReference>
<dbReference type="TCDB" id="2.A.3.8.21">
    <property type="family name" value="the amino acid-polyamine-organocation (apc) family"/>
</dbReference>
<dbReference type="iPTMnet" id="Q9NS82"/>
<dbReference type="PhosphoSitePlus" id="Q9NS82"/>
<dbReference type="BioMuta" id="SLC7A10"/>
<dbReference type="DMDM" id="25089504"/>
<dbReference type="MassIVE" id="Q9NS82"/>
<dbReference type="PaxDb" id="9606-ENSP00000253188"/>
<dbReference type="PeptideAtlas" id="Q9NS82"/>
<dbReference type="ProteomicsDB" id="82507"/>
<dbReference type="Antibodypedia" id="47948">
    <property type="antibodies" value="111 antibodies from 20 providers"/>
</dbReference>
<dbReference type="DNASU" id="56301"/>
<dbReference type="Ensembl" id="ENST00000253188.8">
    <property type="protein sequence ID" value="ENSP00000253188.2"/>
    <property type="gene ID" value="ENSG00000130876.11"/>
</dbReference>
<dbReference type="GeneID" id="56301"/>
<dbReference type="KEGG" id="hsa:56301"/>
<dbReference type="MANE-Select" id="ENST00000253188.8">
    <property type="protein sequence ID" value="ENSP00000253188.2"/>
    <property type="RefSeq nucleotide sequence ID" value="NM_019849.3"/>
    <property type="RefSeq protein sequence ID" value="NP_062823.1"/>
</dbReference>
<dbReference type="UCSC" id="uc002num.2">
    <property type="organism name" value="human"/>
</dbReference>
<dbReference type="AGR" id="HGNC:11058"/>
<dbReference type="CTD" id="56301"/>
<dbReference type="DisGeNET" id="56301"/>
<dbReference type="GeneCards" id="SLC7A10"/>
<dbReference type="HGNC" id="HGNC:11058">
    <property type="gene designation" value="SLC7A10"/>
</dbReference>
<dbReference type="HPA" id="ENSG00000130876">
    <property type="expression patterns" value="Group enriched (adipose tissue, brain, breast)"/>
</dbReference>
<dbReference type="MIM" id="607959">
    <property type="type" value="gene"/>
</dbReference>
<dbReference type="neXtProt" id="NX_Q9NS82"/>
<dbReference type="OpenTargets" id="ENSG00000130876"/>
<dbReference type="PharmGKB" id="PA35918"/>
<dbReference type="VEuPathDB" id="HostDB:ENSG00000130876"/>
<dbReference type="eggNOG" id="KOG1287">
    <property type="taxonomic scope" value="Eukaryota"/>
</dbReference>
<dbReference type="GeneTree" id="ENSGT00940000156469"/>
<dbReference type="HOGENOM" id="CLU_007946_3_0_1"/>
<dbReference type="InParanoid" id="Q9NS82"/>
<dbReference type="OMA" id="PWRDVVP"/>
<dbReference type="OrthoDB" id="3257095at2759"/>
<dbReference type="PAN-GO" id="Q9NS82">
    <property type="GO annotations" value="5 GO annotations based on evolutionary models"/>
</dbReference>
<dbReference type="PhylomeDB" id="Q9NS82"/>
<dbReference type="TreeFam" id="TF313355"/>
<dbReference type="PathwayCommons" id="Q9NS82"/>
<dbReference type="Reactome" id="R-HSA-210991">
    <property type="pathway name" value="Basigin interactions"/>
</dbReference>
<dbReference type="Reactome" id="R-HSA-352230">
    <property type="pathway name" value="Amino acid transport across the plasma membrane"/>
</dbReference>
<dbReference type="SignaLink" id="Q9NS82"/>
<dbReference type="BioGRID-ORCS" id="56301">
    <property type="hits" value="12 hits in 1147 CRISPR screens"/>
</dbReference>
<dbReference type="GeneWiki" id="SLC7A10"/>
<dbReference type="GenomeRNAi" id="56301"/>
<dbReference type="Pharos" id="Q9NS82">
    <property type="development level" value="Tbio"/>
</dbReference>
<dbReference type="PRO" id="PR:Q9NS82"/>
<dbReference type="Proteomes" id="UP000005640">
    <property type="component" value="Chromosome 19"/>
</dbReference>
<dbReference type="RNAct" id="Q9NS82">
    <property type="molecule type" value="protein"/>
</dbReference>
<dbReference type="Bgee" id="ENSG00000130876">
    <property type="expression patterns" value="Expressed in omental fat pad and 93 other cell types or tissues"/>
</dbReference>
<dbReference type="ExpressionAtlas" id="Q9NS82">
    <property type="expression patterns" value="baseline and differential"/>
</dbReference>
<dbReference type="GO" id="GO:0016020">
    <property type="term" value="C:membrane"/>
    <property type="evidence" value="ECO:0000304"/>
    <property type="project" value="ProtInc"/>
</dbReference>
<dbReference type="GO" id="GO:0005886">
    <property type="term" value="C:plasma membrane"/>
    <property type="evidence" value="ECO:0000304"/>
    <property type="project" value="Reactome"/>
</dbReference>
<dbReference type="GO" id="GO:0015179">
    <property type="term" value="F:L-amino acid transmembrane transporter activity"/>
    <property type="evidence" value="ECO:0000318"/>
    <property type="project" value="GO_Central"/>
</dbReference>
<dbReference type="GO" id="GO:0015194">
    <property type="term" value="F:L-serine transmembrane transporter activity"/>
    <property type="evidence" value="ECO:0000304"/>
    <property type="project" value="ProtInc"/>
</dbReference>
<dbReference type="GO" id="GO:0015175">
    <property type="term" value="F:neutral L-amino acid transmembrane transporter activity"/>
    <property type="evidence" value="ECO:0000314"/>
    <property type="project" value="UniProtKB"/>
</dbReference>
<dbReference type="GO" id="GO:0006865">
    <property type="term" value="P:amino acid transport"/>
    <property type="evidence" value="ECO:0000304"/>
    <property type="project" value="ProtInc"/>
</dbReference>
<dbReference type="GO" id="GO:0042941">
    <property type="term" value="P:D-alanine transmembrane transport"/>
    <property type="evidence" value="ECO:0000318"/>
    <property type="project" value="GO_Central"/>
</dbReference>
<dbReference type="GO" id="GO:0042942">
    <property type="term" value="P:D-serine transmembrane transport"/>
    <property type="evidence" value="ECO:0000318"/>
    <property type="project" value="GO_Central"/>
</dbReference>
<dbReference type="GO" id="GO:0015816">
    <property type="term" value="P:glycine transport"/>
    <property type="evidence" value="ECO:0007669"/>
    <property type="project" value="Ensembl"/>
</dbReference>
<dbReference type="GO" id="GO:1903444">
    <property type="term" value="P:negative regulation of brown fat cell differentiation"/>
    <property type="evidence" value="ECO:0007669"/>
    <property type="project" value="Ensembl"/>
</dbReference>
<dbReference type="GO" id="GO:0015804">
    <property type="term" value="P:neutral amino acid transport"/>
    <property type="evidence" value="ECO:0000314"/>
    <property type="project" value="UniProtKB"/>
</dbReference>
<dbReference type="GO" id="GO:0060094">
    <property type="term" value="P:positive regulation of synaptic transmission, glycinergic"/>
    <property type="evidence" value="ECO:0007669"/>
    <property type="project" value="Ensembl"/>
</dbReference>
<dbReference type="FunFam" id="1.20.1740.10:FF:000008">
    <property type="entry name" value="large neutral amino acids transporter small subunit 2"/>
    <property type="match status" value="1"/>
</dbReference>
<dbReference type="Gene3D" id="1.20.1740.10">
    <property type="entry name" value="Amino acid/polyamine transporter I"/>
    <property type="match status" value="1"/>
</dbReference>
<dbReference type="InterPro" id="IPR002293">
    <property type="entry name" value="AA/rel_permease1"/>
</dbReference>
<dbReference type="InterPro" id="IPR050598">
    <property type="entry name" value="AminoAcid_Transporter"/>
</dbReference>
<dbReference type="PANTHER" id="PTHR11785">
    <property type="entry name" value="AMINO ACID TRANSPORTER"/>
    <property type="match status" value="1"/>
</dbReference>
<dbReference type="PANTHER" id="PTHR11785:SF73">
    <property type="entry name" value="ASC-TYPE AMINO ACID TRANSPORTER 1"/>
    <property type="match status" value="1"/>
</dbReference>
<dbReference type="Pfam" id="PF13520">
    <property type="entry name" value="AA_permease_2"/>
    <property type="match status" value="1"/>
</dbReference>
<dbReference type="PIRSF" id="PIRSF006060">
    <property type="entry name" value="AA_transporter"/>
    <property type="match status" value="1"/>
</dbReference>